<keyword id="KW-0472">Membrane</keyword>
<keyword id="KW-1185">Reference proteome</keyword>
<keyword id="KW-0812">Transmembrane</keyword>
<keyword id="KW-1133">Transmembrane helix</keyword>
<feature type="chain" id="PRO_0000360981" description="Transmembrane protein 71">
    <location>
        <begin position="1"/>
        <end position="288"/>
    </location>
</feature>
<feature type="transmembrane region" description="Helical" evidence="1">
    <location>
        <begin position="229"/>
        <end position="249"/>
    </location>
</feature>
<feature type="transmembrane region" description="Helical" evidence="1">
    <location>
        <begin position="250"/>
        <end position="270"/>
    </location>
</feature>
<reference key="1">
    <citation type="journal article" date="2013" name="Nature">
        <title>The zebrafish reference genome sequence and its relationship to the human genome.</title>
        <authorList>
            <person name="Howe K."/>
            <person name="Clark M.D."/>
            <person name="Torroja C.F."/>
            <person name="Torrance J."/>
            <person name="Berthelot C."/>
            <person name="Muffato M."/>
            <person name="Collins J.E."/>
            <person name="Humphray S."/>
            <person name="McLaren K."/>
            <person name="Matthews L."/>
            <person name="McLaren S."/>
            <person name="Sealy I."/>
            <person name="Caccamo M."/>
            <person name="Churcher C."/>
            <person name="Scott C."/>
            <person name="Barrett J.C."/>
            <person name="Koch R."/>
            <person name="Rauch G.J."/>
            <person name="White S."/>
            <person name="Chow W."/>
            <person name="Kilian B."/>
            <person name="Quintais L.T."/>
            <person name="Guerra-Assuncao J.A."/>
            <person name="Zhou Y."/>
            <person name="Gu Y."/>
            <person name="Yen J."/>
            <person name="Vogel J.H."/>
            <person name="Eyre T."/>
            <person name="Redmond S."/>
            <person name="Banerjee R."/>
            <person name="Chi J."/>
            <person name="Fu B."/>
            <person name="Langley E."/>
            <person name="Maguire S.F."/>
            <person name="Laird G.K."/>
            <person name="Lloyd D."/>
            <person name="Kenyon E."/>
            <person name="Donaldson S."/>
            <person name="Sehra H."/>
            <person name="Almeida-King J."/>
            <person name="Loveland J."/>
            <person name="Trevanion S."/>
            <person name="Jones M."/>
            <person name="Quail M."/>
            <person name="Willey D."/>
            <person name="Hunt A."/>
            <person name="Burton J."/>
            <person name="Sims S."/>
            <person name="McLay K."/>
            <person name="Plumb B."/>
            <person name="Davis J."/>
            <person name="Clee C."/>
            <person name="Oliver K."/>
            <person name="Clark R."/>
            <person name="Riddle C."/>
            <person name="Elliot D."/>
            <person name="Threadgold G."/>
            <person name="Harden G."/>
            <person name="Ware D."/>
            <person name="Begum S."/>
            <person name="Mortimore B."/>
            <person name="Kerry G."/>
            <person name="Heath P."/>
            <person name="Phillimore B."/>
            <person name="Tracey A."/>
            <person name="Corby N."/>
            <person name="Dunn M."/>
            <person name="Johnson C."/>
            <person name="Wood J."/>
            <person name="Clark S."/>
            <person name="Pelan S."/>
            <person name="Griffiths G."/>
            <person name="Smith M."/>
            <person name="Glithero R."/>
            <person name="Howden P."/>
            <person name="Barker N."/>
            <person name="Lloyd C."/>
            <person name="Stevens C."/>
            <person name="Harley J."/>
            <person name="Holt K."/>
            <person name="Panagiotidis G."/>
            <person name="Lovell J."/>
            <person name="Beasley H."/>
            <person name="Henderson C."/>
            <person name="Gordon D."/>
            <person name="Auger K."/>
            <person name="Wright D."/>
            <person name="Collins J."/>
            <person name="Raisen C."/>
            <person name="Dyer L."/>
            <person name="Leung K."/>
            <person name="Robertson L."/>
            <person name="Ambridge K."/>
            <person name="Leongamornlert D."/>
            <person name="McGuire S."/>
            <person name="Gilderthorp R."/>
            <person name="Griffiths C."/>
            <person name="Manthravadi D."/>
            <person name="Nichol S."/>
            <person name="Barker G."/>
            <person name="Whitehead S."/>
            <person name="Kay M."/>
            <person name="Brown J."/>
            <person name="Murnane C."/>
            <person name="Gray E."/>
            <person name="Humphries M."/>
            <person name="Sycamore N."/>
            <person name="Barker D."/>
            <person name="Saunders D."/>
            <person name="Wallis J."/>
            <person name="Babbage A."/>
            <person name="Hammond S."/>
            <person name="Mashreghi-Mohammadi M."/>
            <person name="Barr L."/>
            <person name="Martin S."/>
            <person name="Wray P."/>
            <person name="Ellington A."/>
            <person name="Matthews N."/>
            <person name="Ellwood M."/>
            <person name="Woodmansey R."/>
            <person name="Clark G."/>
            <person name="Cooper J."/>
            <person name="Tromans A."/>
            <person name="Grafham D."/>
            <person name="Skuce C."/>
            <person name="Pandian R."/>
            <person name="Andrews R."/>
            <person name="Harrison E."/>
            <person name="Kimberley A."/>
            <person name="Garnett J."/>
            <person name="Fosker N."/>
            <person name="Hall R."/>
            <person name="Garner P."/>
            <person name="Kelly D."/>
            <person name="Bird C."/>
            <person name="Palmer S."/>
            <person name="Gehring I."/>
            <person name="Berger A."/>
            <person name="Dooley C.M."/>
            <person name="Ersan-Urun Z."/>
            <person name="Eser C."/>
            <person name="Geiger H."/>
            <person name="Geisler M."/>
            <person name="Karotki L."/>
            <person name="Kirn A."/>
            <person name="Konantz J."/>
            <person name="Konantz M."/>
            <person name="Oberlander M."/>
            <person name="Rudolph-Geiger S."/>
            <person name="Teucke M."/>
            <person name="Lanz C."/>
            <person name="Raddatz G."/>
            <person name="Osoegawa K."/>
            <person name="Zhu B."/>
            <person name="Rapp A."/>
            <person name="Widaa S."/>
            <person name="Langford C."/>
            <person name="Yang F."/>
            <person name="Schuster S.C."/>
            <person name="Carter N.P."/>
            <person name="Harrow J."/>
            <person name="Ning Z."/>
            <person name="Herrero J."/>
            <person name="Searle S.M."/>
            <person name="Enright A."/>
            <person name="Geisler R."/>
            <person name="Plasterk R.H."/>
            <person name="Lee C."/>
            <person name="Westerfield M."/>
            <person name="de Jong P.J."/>
            <person name="Zon L.I."/>
            <person name="Postlethwait J.H."/>
            <person name="Nusslein-Volhard C."/>
            <person name="Hubbard T.J."/>
            <person name="Roest Crollius H."/>
            <person name="Rogers J."/>
            <person name="Stemple D.L."/>
        </authorList>
    </citation>
    <scope>NUCLEOTIDE SEQUENCE [LARGE SCALE GENOMIC DNA]</scope>
    <source>
        <strain>Tuebingen</strain>
    </source>
</reference>
<protein>
    <recommendedName>
        <fullName>Transmembrane protein 71</fullName>
    </recommendedName>
</protein>
<proteinExistence type="inferred from homology"/>
<accession>B0S728</accession>
<organism>
    <name type="scientific">Danio rerio</name>
    <name type="common">Zebrafish</name>
    <name type="synonym">Brachydanio rerio</name>
    <dbReference type="NCBI Taxonomy" id="7955"/>
    <lineage>
        <taxon>Eukaryota</taxon>
        <taxon>Metazoa</taxon>
        <taxon>Chordata</taxon>
        <taxon>Craniata</taxon>
        <taxon>Vertebrata</taxon>
        <taxon>Euteleostomi</taxon>
        <taxon>Actinopterygii</taxon>
        <taxon>Neopterygii</taxon>
        <taxon>Teleostei</taxon>
        <taxon>Ostariophysi</taxon>
        <taxon>Cypriniformes</taxon>
        <taxon>Danionidae</taxon>
        <taxon>Danioninae</taxon>
        <taxon>Danio</taxon>
    </lineage>
</organism>
<name>TMM71_DANRE</name>
<comment type="subcellular location">
    <subcellularLocation>
        <location evidence="2">Membrane</location>
        <topology evidence="2">Multi-pass membrane protein</topology>
    </subcellularLocation>
</comment>
<comment type="similarity">
    <text evidence="2">Belongs to the TMEM71 family.</text>
</comment>
<gene>
    <name type="primary">tmem71</name>
    <name type="ORF">si:ch211-235o23.1</name>
</gene>
<evidence type="ECO:0000255" key="1"/>
<evidence type="ECO:0000305" key="2"/>
<sequence length="288" mass="32011">MAFFFKGAVTSSPVKTRRQEAEYICHSLDSSHFSDSSFECFSTNPLTGSVCACRRSPRLLSNGYYVLTEDSFNTDDEGNVTLTPSHTSVTYKENLVRIFRRKRRAKRSLASLLSDMSQSCQSWLEGSVFRRSEPITPIQSSWEEFDHSYEKESPISFTYDPIDPVSSPDKLPPQTQLEEEEPQCDSCATHEHFSQSVSGLLDVPPPSVCHLDSYGSSSKTSSENVFMKVLLLILTLCLCIAISSGWLLGGVSAAVAFVVLLSSICVSKPGSSVRWRRAKTEDITSRNE</sequence>
<dbReference type="EMBL" id="BX572635">
    <property type="protein sequence ID" value="CAQ14095.1"/>
    <property type="molecule type" value="Genomic_DNA"/>
</dbReference>
<dbReference type="RefSeq" id="NP_001124325.1">
    <property type="nucleotide sequence ID" value="NM_001130853.3"/>
</dbReference>
<dbReference type="RefSeq" id="XP_009297001.1">
    <property type="nucleotide sequence ID" value="XM_009298726.2"/>
</dbReference>
<dbReference type="SMR" id="B0S728"/>
<dbReference type="FunCoup" id="B0S728">
    <property type="interactions" value="130"/>
</dbReference>
<dbReference type="STRING" id="7955.ENSDARP00000122187"/>
<dbReference type="PaxDb" id="7955-ENSDARP00000104255"/>
<dbReference type="Ensembl" id="ENSDART00000147019">
    <property type="protein sequence ID" value="ENSDARP00000122187"/>
    <property type="gene ID" value="ENSDARG00000079784"/>
</dbReference>
<dbReference type="GeneID" id="570302"/>
<dbReference type="KEGG" id="dre:570302"/>
<dbReference type="AGR" id="ZFIN:ZDB-GENE-070912-222"/>
<dbReference type="CTD" id="137835"/>
<dbReference type="ZFIN" id="ZDB-GENE-070912-222">
    <property type="gene designation" value="tmem71"/>
</dbReference>
<dbReference type="eggNOG" id="ENOG502RZWR">
    <property type="taxonomic scope" value="Eukaryota"/>
</dbReference>
<dbReference type="HOGENOM" id="CLU_084224_1_0_1"/>
<dbReference type="InParanoid" id="B0S728"/>
<dbReference type="OMA" id="SCWWSAM"/>
<dbReference type="OrthoDB" id="8961338at2759"/>
<dbReference type="TreeFam" id="TF337383"/>
<dbReference type="PRO" id="PR:B0S728"/>
<dbReference type="Proteomes" id="UP000000437">
    <property type="component" value="Chromosome 2"/>
</dbReference>
<dbReference type="Bgee" id="ENSDARG00000079784">
    <property type="expression patterns" value="Expressed in heart and 19 other cell types or tissues"/>
</dbReference>
<dbReference type="GO" id="GO:0016020">
    <property type="term" value="C:membrane"/>
    <property type="evidence" value="ECO:0007669"/>
    <property type="project" value="UniProtKB-SubCell"/>
</dbReference>
<dbReference type="InterPro" id="IPR027975">
    <property type="entry name" value="TMEM71"/>
</dbReference>
<dbReference type="PANTHER" id="PTHR35255">
    <property type="entry name" value="TRANSMEMBRANE PROTEIN 71"/>
    <property type="match status" value="1"/>
</dbReference>
<dbReference type="PANTHER" id="PTHR35255:SF1">
    <property type="entry name" value="TRANSMEMBRANE PROTEIN 71"/>
    <property type="match status" value="1"/>
</dbReference>
<dbReference type="Pfam" id="PF15121">
    <property type="entry name" value="TMEM71"/>
    <property type="match status" value="1"/>
</dbReference>